<reference key="1">
    <citation type="journal article" date="2007" name="Plant J.">
        <title>A leucine-rich repeat protein is required for growth promotion and enhanced seed production mediated by the endophytic fungus Piriformospora indica in Arabidopsis thaliana.</title>
        <authorList>
            <person name="Shahollari B."/>
            <person name="Vadassery J."/>
            <person name="Varma A."/>
            <person name="Oelmueller R."/>
        </authorList>
    </citation>
    <scope>NUCLEOTIDE SEQUENCE [GENOMIC DNA]</scope>
    <scope>FUNCTION</scope>
    <scope>SUBCELLULAR LOCATION</scope>
</reference>
<reference key="2">
    <citation type="journal article" date="2000" name="Nature">
        <title>Sequence and analysis of chromosome 1 of the plant Arabidopsis thaliana.</title>
        <authorList>
            <person name="Theologis A."/>
            <person name="Ecker J.R."/>
            <person name="Palm C.J."/>
            <person name="Federspiel N.A."/>
            <person name="Kaul S."/>
            <person name="White O."/>
            <person name="Alonso J."/>
            <person name="Altafi H."/>
            <person name="Araujo R."/>
            <person name="Bowman C.L."/>
            <person name="Brooks S.Y."/>
            <person name="Buehler E."/>
            <person name="Chan A."/>
            <person name="Chao Q."/>
            <person name="Chen H."/>
            <person name="Cheuk R.F."/>
            <person name="Chin C.W."/>
            <person name="Chung M.K."/>
            <person name="Conn L."/>
            <person name="Conway A.B."/>
            <person name="Conway A.R."/>
            <person name="Creasy T.H."/>
            <person name="Dewar K."/>
            <person name="Dunn P."/>
            <person name="Etgu P."/>
            <person name="Feldblyum T.V."/>
            <person name="Feng J.-D."/>
            <person name="Fong B."/>
            <person name="Fujii C.Y."/>
            <person name="Gill J.E."/>
            <person name="Goldsmith A.D."/>
            <person name="Haas B."/>
            <person name="Hansen N.F."/>
            <person name="Hughes B."/>
            <person name="Huizar L."/>
            <person name="Hunter J.L."/>
            <person name="Jenkins J."/>
            <person name="Johnson-Hopson C."/>
            <person name="Khan S."/>
            <person name="Khaykin E."/>
            <person name="Kim C.J."/>
            <person name="Koo H.L."/>
            <person name="Kremenetskaia I."/>
            <person name="Kurtz D.B."/>
            <person name="Kwan A."/>
            <person name="Lam B."/>
            <person name="Langin-Hooper S."/>
            <person name="Lee A."/>
            <person name="Lee J.M."/>
            <person name="Lenz C.A."/>
            <person name="Li J.H."/>
            <person name="Li Y.-P."/>
            <person name="Lin X."/>
            <person name="Liu S.X."/>
            <person name="Liu Z.A."/>
            <person name="Luros J.S."/>
            <person name="Maiti R."/>
            <person name="Marziali A."/>
            <person name="Militscher J."/>
            <person name="Miranda M."/>
            <person name="Nguyen M."/>
            <person name="Nierman W.C."/>
            <person name="Osborne B.I."/>
            <person name="Pai G."/>
            <person name="Peterson J."/>
            <person name="Pham P.K."/>
            <person name="Rizzo M."/>
            <person name="Rooney T."/>
            <person name="Rowley D."/>
            <person name="Sakano H."/>
            <person name="Salzberg S.L."/>
            <person name="Schwartz J.R."/>
            <person name="Shinn P."/>
            <person name="Southwick A.M."/>
            <person name="Sun H."/>
            <person name="Tallon L.J."/>
            <person name="Tambunga G."/>
            <person name="Toriumi M.J."/>
            <person name="Town C.D."/>
            <person name="Utterback T."/>
            <person name="Van Aken S."/>
            <person name="Vaysberg M."/>
            <person name="Vysotskaia V.S."/>
            <person name="Walker M."/>
            <person name="Wu D."/>
            <person name="Yu G."/>
            <person name="Fraser C.M."/>
            <person name="Venter J.C."/>
            <person name="Davis R.W."/>
        </authorList>
    </citation>
    <scope>NUCLEOTIDE SEQUENCE [LARGE SCALE GENOMIC DNA]</scope>
    <source>
        <strain>cv. Columbia</strain>
    </source>
</reference>
<reference key="3">
    <citation type="journal article" date="2017" name="Plant J.">
        <title>Araport11: a complete reannotation of the Arabidopsis thaliana reference genome.</title>
        <authorList>
            <person name="Cheng C.Y."/>
            <person name="Krishnakumar V."/>
            <person name="Chan A.P."/>
            <person name="Thibaud-Nissen F."/>
            <person name="Schobel S."/>
            <person name="Town C.D."/>
        </authorList>
    </citation>
    <scope>GENOME REANNOTATION</scope>
    <source>
        <strain>cv. Columbia</strain>
    </source>
</reference>
<reference key="4">
    <citation type="submission" date="2004-12" db="EMBL/GenBank/DDBJ databases">
        <title>Arabidopsis ORF clones.</title>
        <authorList>
            <person name="Cheuk R.F."/>
            <person name="Chen H."/>
            <person name="Kim C.J."/>
            <person name="Shinn P."/>
            <person name="Ecker J.R."/>
        </authorList>
    </citation>
    <scope>NUCLEOTIDE SEQUENCE [LARGE SCALE MRNA]</scope>
    <source>
        <strain>cv. Columbia</strain>
    </source>
</reference>
<gene>
    <name type="primary">PII-2</name>
    <name type="ordered locus">At1g13230</name>
    <name type="ORF">F3F19.26</name>
</gene>
<dbReference type="EMBL" id="AC007357">
    <property type="protein sequence ID" value="AAD31076.1"/>
    <property type="status" value="ALT_SEQ"/>
    <property type="molecule type" value="Genomic_DNA"/>
</dbReference>
<dbReference type="EMBL" id="CP002684">
    <property type="protein sequence ID" value="AEE28988.1"/>
    <property type="molecule type" value="Genomic_DNA"/>
</dbReference>
<dbReference type="EMBL" id="BT020271">
    <property type="protein sequence ID" value="AAV84492.1"/>
    <property type="molecule type" value="mRNA"/>
</dbReference>
<dbReference type="PIR" id="H86266">
    <property type="entry name" value="H86266"/>
</dbReference>
<dbReference type="RefSeq" id="NP_172782.2">
    <property type="nucleotide sequence ID" value="NM_101195.3"/>
</dbReference>
<dbReference type="SMR" id="Q5PP26"/>
<dbReference type="STRING" id="3702.Q5PP26"/>
<dbReference type="PaxDb" id="3702-AT1G13230.1"/>
<dbReference type="ProteomicsDB" id="236147"/>
<dbReference type="EnsemblPlants" id="AT1G13230.1">
    <property type="protein sequence ID" value="AT1G13230.1"/>
    <property type="gene ID" value="AT1G13230"/>
</dbReference>
<dbReference type="GeneID" id="837883"/>
<dbReference type="Gramene" id="AT1G13230.1">
    <property type="protein sequence ID" value="AT1G13230.1"/>
    <property type="gene ID" value="AT1G13230"/>
</dbReference>
<dbReference type="KEGG" id="ath:AT1G13230"/>
<dbReference type="Araport" id="AT1G13230"/>
<dbReference type="TAIR" id="AT1G13230"/>
<dbReference type="eggNOG" id="KOG0619">
    <property type="taxonomic scope" value="Eukaryota"/>
</dbReference>
<dbReference type="HOGENOM" id="CLU_000288_18_25_1"/>
<dbReference type="InParanoid" id="Q5PP26"/>
<dbReference type="OMA" id="EEAPMDK"/>
<dbReference type="PhylomeDB" id="Q5PP26"/>
<dbReference type="PRO" id="PR:Q5PP26"/>
<dbReference type="Proteomes" id="UP000006548">
    <property type="component" value="Chromosome 1"/>
</dbReference>
<dbReference type="ExpressionAtlas" id="Q5PP26">
    <property type="expression patterns" value="baseline and differential"/>
</dbReference>
<dbReference type="GO" id="GO:0005886">
    <property type="term" value="C:plasma membrane"/>
    <property type="evidence" value="ECO:0000314"/>
    <property type="project" value="TAIR"/>
</dbReference>
<dbReference type="GO" id="GO:0044403">
    <property type="term" value="P:biological process involved in symbiotic interaction"/>
    <property type="evidence" value="ECO:0000315"/>
    <property type="project" value="TAIR"/>
</dbReference>
<dbReference type="GO" id="GO:0009610">
    <property type="term" value="P:response to symbiotic fungus"/>
    <property type="evidence" value="ECO:0000315"/>
    <property type="project" value="TAIR"/>
</dbReference>
<dbReference type="FunFam" id="3.80.10.10:FF:000269">
    <property type="entry name" value="Piriformospora indica-insensitive protein 2"/>
    <property type="match status" value="1"/>
</dbReference>
<dbReference type="FunFam" id="3.80.10.10:FF:000299">
    <property type="entry name" value="Piriformospora indica-insensitive protein 2"/>
    <property type="match status" value="1"/>
</dbReference>
<dbReference type="FunFam" id="3.80.10.10:FF:000375">
    <property type="entry name" value="Piriformospora indica-insensitive protein 2"/>
    <property type="match status" value="1"/>
</dbReference>
<dbReference type="Gene3D" id="3.80.10.10">
    <property type="entry name" value="Ribonuclease Inhibitor"/>
    <property type="match status" value="3"/>
</dbReference>
<dbReference type="InterPro" id="IPR001611">
    <property type="entry name" value="Leu-rich_rpt"/>
</dbReference>
<dbReference type="InterPro" id="IPR032675">
    <property type="entry name" value="LRR_dom_sf"/>
</dbReference>
<dbReference type="InterPro" id="IPR052941">
    <property type="entry name" value="StomDev_PlantInt_Reg"/>
</dbReference>
<dbReference type="PANTHER" id="PTHR48004:SF29">
    <property type="entry name" value="LEUCINE-RICH REPEAT (LRR) FAMILY PROTEIN"/>
    <property type="match status" value="1"/>
</dbReference>
<dbReference type="PANTHER" id="PTHR48004">
    <property type="entry name" value="OS01G0149700 PROTEIN"/>
    <property type="match status" value="1"/>
</dbReference>
<dbReference type="Pfam" id="PF00560">
    <property type="entry name" value="LRR_1"/>
    <property type="match status" value="2"/>
</dbReference>
<dbReference type="Pfam" id="PF13855">
    <property type="entry name" value="LRR_8"/>
    <property type="match status" value="1"/>
</dbReference>
<dbReference type="SUPFAM" id="SSF52058">
    <property type="entry name" value="L domain-like"/>
    <property type="match status" value="1"/>
</dbReference>
<protein>
    <recommendedName>
        <fullName>Piriformospora indica-insensitive protein 2</fullName>
    </recommendedName>
</protein>
<accession>Q5PP26</accession>
<accession>Q9SAF7</accession>
<feature type="signal peptide" evidence="1">
    <location>
        <begin position="1"/>
        <end position="21"/>
    </location>
</feature>
<feature type="chain" id="PRO_0000317072" description="Piriformospora indica-insensitive protein 2">
    <location>
        <begin position="22"/>
        <end position="424"/>
    </location>
</feature>
<feature type="repeat" description="LRR 1">
    <location>
        <begin position="141"/>
        <end position="166"/>
    </location>
</feature>
<feature type="repeat" description="LRR 2">
    <location>
        <begin position="167"/>
        <end position="190"/>
    </location>
</feature>
<feature type="repeat" description="LRR 3">
    <location>
        <begin position="191"/>
        <end position="213"/>
    </location>
</feature>
<feature type="repeat" description="LRR 4">
    <location>
        <begin position="214"/>
        <end position="237"/>
    </location>
</feature>
<feature type="repeat" description="LRR 5">
    <location>
        <begin position="238"/>
        <end position="263"/>
    </location>
</feature>
<feature type="repeat" description="LRR 6">
    <location>
        <begin position="265"/>
        <end position="286"/>
    </location>
</feature>
<feature type="repeat" description="LRR 7">
    <location>
        <begin position="287"/>
        <end position="311"/>
    </location>
</feature>
<feature type="repeat" description="LRR 8">
    <location>
        <begin position="312"/>
        <end position="336"/>
    </location>
</feature>
<feature type="repeat" description="LRR 9">
    <location>
        <begin position="337"/>
        <end position="360"/>
    </location>
</feature>
<feature type="repeat" description="LRR 10">
    <location>
        <begin position="362"/>
        <end position="387"/>
    </location>
</feature>
<keyword id="KW-1003">Cell membrane</keyword>
<keyword id="KW-0433">Leucine-rich repeat</keyword>
<keyword id="KW-0472">Membrane</keyword>
<keyword id="KW-1185">Reference proteome</keyword>
<keyword id="KW-0677">Repeat</keyword>
<keyword id="KW-0732">Signal</keyword>
<name>PII2_ARATH</name>
<comment type="function">
    <text evidence="2">Required for growth promotion and enhanced seed production mediated by the endophytic fungus Piriformospora indica.</text>
</comment>
<comment type="subcellular location">
    <subcellularLocation>
        <location evidence="4">Cell membrane</location>
        <topology evidence="4">Peripheral membrane protein</topology>
        <orientation evidence="4">Extracellular side</orientation>
    </subcellularLocation>
</comment>
<comment type="miscellaneous">
    <text>Loss-of-function mutants do not show any induction of At5g16590, another leucine-rich repeat protein located in plasma membrane microdomains.</text>
</comment>
<comment type="sequence caution" evidence="3">
    <conflict type="erroneous gene model prediction">
        <sequence resource="EMBL-CDS" id="AAD31076"/>
    </conflict>
</comment>
<evidence type="ECO:0000255" key="1"/>
<evidence type="ECO:0000269" key="2">
    <source>
    </source>
</evidence>
<evidence type="ECO:0000305" key="3"/>
<evidence type="ECO:0000305" key="4">
    <source>
    </source>
</evidence>
<proteinExistence type="evidence at transcript level"/>
<sequence>MLWQTFFSSLLLLSLLFGCNGDESLPEVTDSEEAPMDKREREALYSAIQGFVGDSWNGSALYPDPCGWTPIQGVSCDIYNDLWYVTDLSLGLIYENSLPCSSSLQIRPELFELKHLRSLSFFNCFISPMVIAKEELWTNFASNLESLEFRSNPGLIGELPETIGNLTKLKSLVVLENGFSGELPASICNLKRLKRLVFAGNSFAGMIPNCFKGLKELLILDLSRNSFSGTLPTSFGDLVSLLKLDLSNNLLEGNLPQELGFLKNLTLLDLRNNRFSGGLSKNIENIQSLTELVLSNNPMGEEDMVGTNWGKMSNLVVLDLSKMGLRGEIPTSLTNLKRLRFLGLNNNNLTGFVPSKKLEALPCLGALYINGNNLTGELRFSTKFYEKMGRRFKASKNPNLCQPLEMVMSESHKHLSPLGVKPCT</sequence>
<organism>
    <name type="scientific">Arabidopsis thaliana</name>
    <name type="common">Mouse-ear cress</name>
    <dbReference type="NCBI Taxonomy" id="3702"/>
    <lineage>
        <taxon>Eukaryota</taxon>
        <taxon>Viridiplantae</taxon>
        <taxon>Streptophyta</taxon>
        <taxon>Embryophyta</taxon>
        <taxon>Tracheophyta</taxon>
        <taxon>Spermatophyta</taxon>
        <taxon>Magnoliopsida</taxon>
        <taxon>eudicotyledons</taxon>
        <taxon>Gunneridae</taxon>
        <taxon>Pentapetalae</taxon>
        <taxon>rosids</taxon>
        <taxon>malvids</taxon>
        <taxon>Brassicales</taxon>
        <taxon>Brassicaceae</taxon>
        <taxon>Camelineae</taxon>
        <taxon>Arabidopsis</taxon>
    </lineage>
</organism>